<gene>
    <name evidence="1" type="primary">leuA</name>
    <name type="ordered locus">ECS88_0079</name>
</gene>
<reference key="1">
    <citation type="journal article" date="2009" name="PLoS Genet.">
        <title>Organised genome dynamics in the Escherichia coli species results in highly diverse adaptive paths.</title>
        <authorList>
            <person name="Touchon M."/>
            <person name="Hoede C."/>
            <person name="Tenaillon O."/>
            <person name="Barbe V."/>
            <person name="Baeriswyl S."/>
            <person name="Bidet P."/>
            <person name="Bingen E."/>
            <person name="Bonacorsi S."/>
            <person name="Bouchier C."/>
            <person name="Bouvet O."/>
            <person name="Calteau A."/>
            <person name="Chiapello H."/>
            <person name="Clermont O."/>
            <person name="Cruveiller S."/>
            <person name="Danchin A."/>
            <person name="Diard M."/>
            <person name="Dossat C."/>
            <person name="Karoui M.E."/>
            <person name="Frapy E."/>
            <person name="Garry L."/>
            <person name="Ghigo J.M."/>
            <person name="Gilles A.M."/>
            <person name="Johnson J."/>
            <person name="Le Bouguenec C."/>
            <person name="Lescat M."/>
            <person name="Mangenot S."/>
            <person name="Martinez-Jehanne V."/>
            <person name="Matic I."/>
            <person name="Nassif X."/>
            <person name="Oztas S."/>
            <person name="Petit M.A."/>
            <person name="Pichon C."/>
            <person name="Rouy Z."/>
            <person name="Ruf C.S."/>
            <person name="Schneider D."/>
            <person name="Tourret J."/>
            <person name="Vacherie B."/>
            <person name="Vallenet D."/>
            <person name="Medigue C."/>
            <person name="Rocha E.P.C."/>
            <person name="Denamur E."/>
        </authorList>
    </citation>
    <scope>NUCLEOTIDE SEQUENCE [LARGE SCALE GENOMIC DNA]</scope>
    <source>
        <strain>S88 / ExPEC</strain>
    </source>
</reference>
<comment type="function">
    <text evidence="1">Catalyzes the condensation of the acetyl group of acetyl-CoA with 3-methyl-2-oxobutanoate (2-ketoisovalerate) to form 3-carboxy-3-hydroxy-4-methylpentanoate (2-isopropylmalate).</text>
</comment>
<comment type="catalytic activity">
    <reaction evidence="1">
        <text>3-methyl-2-oxobutanoate + acetyl-CoA + H2O = (2S)-2-isopropylmalate + CoA + H(+)</text>
        <dbReference type="Rhea" id="RHEA:21524"/>
        <dbReference type="ChEBI" id="CHEBI:1178"/>
        <dbReference type="ChEBI" id="CHEBI:11851"/>
        <dbReference type="ChEBI" id="CHEBI:15377"/>
        <dbReference type="ChEBI" id="CHEBI:15378"/>
        <dbReference type="ChEBI" id="CHEBI:57287"/>
        <dbReference type="ChEBI" id="CHEBI:57288"/>
        <dbReference type="EC" id="2.3.3.13"/>
    </reaction>
</comment>
<comment type="cofactor">
    <cofactor evidence="1">
        <name>Mn(2+)</name>
        <dbReference type="ChEBI" id="CHEBI:29035"/>
    </cofactor>
</comment>
<comment type="pathway">
    <text evidence="1">Amino-acid biosynthesis; L-leucine biosynthesis; L-leucine from 3-methyl-2-oxobutanoate: step 1/4.</text>
</comment>
<comment type="subunit">
    <text evidence="1">Homodimer.</text>
</comment>
<comment type="subcellular location">
    <subcellularLocation>
        <location evidence="1">Cytoplasm</location>
    </subcellularLocation>
</comment>
<comment type="similarity">
    <text evidence="1">Belongs to the alpha-IPM synthase/homocitrate synthase family. LeuA type 1 subfamily.</text>
</comment>
<keyword id="KW-0028">Amino-acid biosynthesis</keyword>
<keyword id="KW-0100">Branched-chain amino acid biosynthesis</keyword>
<keyword id="KW-0963">Cytoplasm</keyword>
<keyword id="KW-0432">Leucine biosynthesis</keyword>
<keyword id="KW-0464">Manganese</keyword>
<keyword id="KW-0479">Metal-binding</keyword>
<keyword id="KW-1185">Reference proteome</keyword>
<keyword id="KW-0808">Transferase</keyword>
<protein>
    <recommendedName>
        <fullName evidence="1">2-isopropylmalate synthase</fullName>
        <ecNumber evidence="1">2.3.3.13</ecNumber>
    </recommendedName>
    <alternativeName>
        <fullName evidence="1">Alpha-IPM synthase</fullName>
    </alternativeName>
    <alternativeName>
        <fullName evidence="1">Alpha-isopropylmalate synthase</fullName>
    </alternativeName>
</protein>
<organism>
    <name type="scientific">Escherichia coli O45:K1 (strain S88 / ExPEC)</name>
    <dbReference type="NCBI Taxonomy" id="585035"/>
    <lineage>
        <taxon>Bacteria</taxon>
        <taxon>Pseudomonadati</taxon>
        <taxon>Pseudomonadota</taxon>
        <taxon>Gammaproteobacteria</taxon>
        <taxon>Enterobacterales</taxon>
        <taxon>Enterobacteriaceae</taxon>
        <taxon>Escherichia</taxon>
    </lineage>
</organism>
<accession>B7MAJ9</accession>
<name>LEU1_ECO45</name>
<evidence type="ECO:0000255" key="1">
    <source>
        <dbReference type="HAMAP-Rule" id="MF_01025"/>
    </source>
</evidence>
<sequence length="523" mass="57284">MSQQVIIFDTTLRDGEQALQASLSVKEKLQIALALERMGVDVMEVGFPVSSPGDFESVQTIARQVKNSRVCALARCVEKDIDVAAESLKVAEAFRIHTFIATSPMHIATKLRSTLDEVIERAIYMVKRARNYTDDVEFSCEDAGRTPIADLARVVEAAINAGATTINIPDTVGYTMPFEFAGIISGLYERVPNIDKAIISVHTHDDLGLAVGNSLAAVHAGARQVEGAMNGIGERAGNCSLEEVIMAIKVRKDILNVHTAINHQEIWRTSQLVSQICNMPIPANKAIVGSGAFAHSSGIHQDGVLKNRENYEIMTPESIGLNQIQLNLTSRSGRAAVKHRMDEMGYKESEYNLDNLYDAFLKLADKKGQVFDYDLEALAFIGKQQEEPEHFRLDYFSVQSGSNDIATAAVKLACGEEVKAEAANGNGPVDAVYQAINRITDYNVELVKYSLTAKGHGKDALGQVDIVANYNGRRFHGVGLATDIVESSAKAMVHVLNNIWRAAEVEKELQRKAQHNENNKETV</sequence>
<dbReference type="EC" id="2.3.3.13" evidence="1"/>
<dbReference type="EMBL" id="CU928161">
    <property type="protein sequence ID" value="CAR01445.1"/>
    <property type="molecule type" value="Genomic_DNA"/>
</dbReference>
<dbReference type="RefSeq" id="WP_000082846.1">
    <property type="nucleotide sequence ID" value="NC_011742.1"/>
</dbReference>
<dbReference type="SMR" id="B7MAJ9"/>
<dbReference type="GeneID" id="75202109"/>
<dbReference type="KEGG" id="ecz:ECS88_0079"/>
<dbReference type="HOGENOM" id="CLU_022158_0_1_6"/>
<dbReference type="UniPathway" id="UPA00048">
    <property type="reaction ID" value="UER00070"/>
</dbReference>
<dbReference type="Proteomes" id="UP000000747">
    <property type="component" value="Chromosome"/>
</dbReference>
<dbReference type="GO" id="GO:0005829">
    <property type="term" value="C:cytosol"/>
    <property type="evidence" value="ECO:0007669"/>
    <property type="project" value="TreeGrafter"/>
</dbReference>
<dbReference type="GO" id="GO:0003852">
    <property type="term" value="F:2-isopropylmalate synthase activity"/>
    <property type="evidence" value="ECO:0007669"/>
    <property type="project" value="UniProtKB-UniRule"/>
</dbReference>
<dbReference type="GO" id="GO:0003985">
    <property type="term" value="F:acetyl-CoA C-acetyltransferase activity"/>
    <property type="evidence" value="ECO:0007669"/>
    <property type="project" value="UniProtKB-UniRule"/>
</dbReference>
<dbReference type="GO" id="GO:0030145">
    <property type="term" value="F:manganese ion binding"/>
    <property type="evidence" value="ECO:0007669"/>
    <property type="project" value="UniProtKB-UniRule"/>
</dbReference>
<dbReference type="GO" id="GO:0009098">
    <property type="term" value="P:L-leucine biosynthetic process"/>
    <property type="evidence" value="ECO:0007669"/>
    <property type="project" value="UniProtKB-UniRule"/>
</dbReference>
<dbReference type="CDD" id="cd07940">
    <property type="entry name" value="DRE_TIM_IPMS"/>
    <property type="match status" value="1"/>
</dbReference>
<dbReference type="FunFam" id="1.10.238.260:FF:000001">
    <property type="entry name" value="2-isopropylmalate synthase"/>
    <property type="match status" value="1"/>
</dbReference>
<dbReference type="FunFam" id="3.20.20.70:FF:000010">
    <property type="entry name" value="2-isopropylmalate synthase"/>
    <property type="match status" value="1"/>
</dbReference>
<dbReference type="FunFam" id="3.30.160.270:FF:000001">
    <property type="entry name" value="2-isopropylmalate synthase"/>
    <property type="match status" value="1"/>
</dbReference>
<dbReference type="Gene3D" id="1.10.238.260">
    <property type="match status" value="1"/>
</dbReference>
<dbReference type="Gene3D" id="3.30.160.270">
    <property type="match status" value="1"/>
</dbReference>
<dbReference type="Gene3D" id="3.20.20.70">
    <property type="entry name" value="Aldolase class I"/>
    <property type="match status" value="1"/>
</dbReference>
<dbReference type="HAMAP" id="MF_01025">
    <property type="entry name" value="LeuA_type1"/>
    <property type="match status" value="1"/>
</dbReference>
<dbReference type="InterPro" id="IPR050073">
    <property type="entry name" value="2-IPM_HCS-like"/>
</dbReference>
<dbReference type="InterPro" id="IPR013709">
    <property type="entry name" value="2-isopropylmalate_synth_dimer"/>
</dbReference>
<dbReference type="InterPro" id="IPR002034">
    <property type="entry name" value="AIPM/Hcit_synth_CS"/>
</dbReference>
<dbReference type="InterPro" id="IPR013785">
    <property type="entry name" value="Aldolase_TIM"/>
</dbReference>
<dbReference type="InterPro" id="IPR054691">
    <property type="entry name" value="LeuA/HCS_post-cat"/>
</dbReference>
<dbReference type="InterPro" id="IPR036230">
    <property type="entry name" value="LeuA_allosteric_dom_sf"/>
</dbReference>
<dbReference type="InterPro" id="IPR005671">
    <property type="entry name" value="LeuA_bact_synth"/>
</dbReference>
<dbReference type="InterPro" id="IPR000891">
    <property type="entry name" value="PYR_CT"/>
</dbReference>
<dbReference type="NCBIfam" id="TIGR00973">
    <property type="entry name" value="leuA_bact"/>
    <property type="match status" value="1"/>
</dbReference>
<dbReference type="NCBIfam" id="NF002084">
    <property type="entry name" value="PRK00915.1-1"/>
    <property type="match status" value="1"/>
</dbReference>
<dbReference type="NCBIfam" id="NF002086">
    <property type="entry name" value="PRK00915.1-3"/>
    <property type="match status" value="1"/>
</dbReference>
<dbReference type="PANTHER" id="PTHR10277:SF9">
    <property type="entry name" value="2-ISOPROPYLMALATE SYNTHASE 1, CHLOROPLASTIC-RELATED"/>
    <property type="match status" value="1"/>
</dbReference>
<dbReference type="PANTHER" id="PTHR10277">
    <property type="entry name" value="HOMOCITRATE SYNTHASE-RELATED"/>
    <property type="match status" value="1"/>
</dbReference>
<dbReference type="Pfam" id="PF22617">
    <property type="entry name" value="HCS_D2"/>
    <property type="match status" value="1"/>
</dbReference>
<dbReference type="Pfam" id="PF00682">
    <property type="entry name" value="HMGL-like"/>
    <property type="match status" value="1"/>
</dbReference>
<dbReference type="Pfam" id="PF08502">
    <property type="entry name" value="LeuA_dimer"/>
    <property type="match status" value="1"/>
</dbReference>
<dbReference type="SMART" id="SM00917">
    <property type="entry name" value="LeuA_dimer"/>
    <property type="match status" value="1"/>
</dbReference>
<dbReference type="SUPFAM" id="SSF110921">
    <property type="entry name" value="2-isopropylmalate synthase LeuA, allosteric (dimerisation) domain"/>
    <property type="match status" value="1"/>
</dbReference>
<dbReference type="SUPFAM" id="SSF51569">
    <property type="entry name" value="Aldolase"/>
    <property type="match status" value="1"/>
</dbReference>
<dbReference type="PROSITE" id="PS00815">
    <property type="entry name" value="AIPM_HOMOCIT_SYNTH_1"/>
    <property type="match status" value="1"/>
</dbReference>
<dbReference type="PROSITE" id="PS00816">
    <property type="entry name" value="AIPM_HOMOCIT_SYNTH_2"/>
    <property type="match status" value="1"/>
</dbReference>
<dbReference type="PROSITE" id="PS50991">
    <property type="entry name" value="PYR_CT"/>
    <property type="match status" value="1"/>
</dbReference>
<feature type="chain" id="PRO_1000149184" description="2-isopropylmalate synthase">
    <location>
        <begin position="1"/>
        <end position="523"/>
    </location>
</feature>
<feature type="domain" description="Pyruvate carboxyltransferase" evidence="1">
    <location>
        <begin position="5"/>
        <end position="267"/>
    </location>
</feature>
<feature type="region of interest" description="Regulatory domain" evidence="1">
    <location>
        <begin position="392"/>
        <end position="523"/>
    </location>
</feature>
<feature type="binding site" evidence="1">
    <location>
        <position position="14"/>
    </location>
    <ligand>
        <name>Mn(2+)</name>
        <dbReference type="ChEBI" id="CHEBI:29035"/>
    </ligand>
</feature>
<feature type="binding site" evidence="1">
    <location>
        <position position="202"/>
    </location>
    <ligand>
        <name>Mn(2+)</name>
        <dbReference type="ChEBI" id="CHEBI:29035"/>
    </ligand>
</feature>
<feature type="binding site" evidence="1">
    <location>
        <position position="204"/>
    </location>
    <ligand>
        <name>Mn(2+)</name>
        <dbReference type="ChEBI" id="CHEBI:29035"/>
    </ligand>
</feature>
<feature type="binding site" evidence="1">
    <location>
        <position position="238"/>
    </location>
    <ligand>
        <name>Mn(2+)</name>
        <dbReference type="ChEBI" id="CHEBI:29035"/>
    </ligand>
</feature>
<proteinExistence type="inferred from homology"/>